<gene>
    <name type="primary">Krt84</name>
    <name type="synonym">Krt2-16</name>
    <name type="synonym">Krthb4</name>
</gene>
<sequence>MSCRSYRVSSGRRVGSFSSCSAMAPQHLNRFRSSSVSCRSGPGFRGLGGFGSRSVINFGSSSPRIAVGCSRPVRCGVGFGAGSGMAFGSGDGLGFRASSGVGLGFGAGGCPSYGFGGPGFGGPGFGGPGFGYRIGGIGGPSAPAITAVTVNQSLLTPLNLEIDPNAQRVKRDEKEQIKTLNNKFASFIDKVRFLEQQNKLLETKWSFLQEQKCARSNLEPLFDNYITNLRRQLDVLSSDQARLQAERNHLQDILEGFKKKYEEEVVFRANAENEFVALKKDVDAAFLNKSDLEANVDTLIQETEFLKALYHEEIEMLQSHISETSVIVKMDNSRDLNLDGIIAEVKAQYEEVARRSRADVESWYQTKYEEMRVTAGQHCDNLRSTRDEINELTRLIQRLKAEIEHTKAQCAKLEAAVAEAEQQGEAALNDAKCKLADLEGALQQAKQDMARQLREYQELMNVKLALDIEIVTYRRLLEGEEIRICEGVGPVNISVSSSRGGVLCGPELVSGSSLSHNGGVTFSTSSSIRATGGVLASSSLRAGGDLLSSGSRGGSVLVGDACAPSIPCALPTEGGFSSCSGGRGNRSSSVRFSSTTTSRRTRY</sequence>
<evidence type="ECO:0000250" key="1"/>
<evidence type="ECO:0000255" key="2">
    <source>
        <dbReference type="PROSITE-ProRule" id="PRU01188"/>
    </source>
</evidence>
<evidence type="ECO:0000256" key="3">
    <source>
        <dbReference type="SAM" id="MobiDB-lite"/>
    </source>
</evidence>
<evidence type="ECO:0000269" key="4">
    <source>
    </source>
</evidence>
<evidence type="ECO:0000305" key="5"/>
<name>KRT84_MOUSE</name>
<protein>
    <recommendedName>
        <fullName>Keratin, type II cuticular Hb4</fullName>
    </recommendedName>
    <alternativeName>
        <fullName>65 kDa type II keratin</fullName>
    </alternativeName>
    <alternativeName>
        <fullName>Keratin-84</fullName>
        <shortName>K84</shortName>
    </alternativeName>
    <alternativeName>
        <fullName>Type II hair keratin Hb4</fullName>
    </alternativeName>
    <alternativeName>
        <fullName>Type-II keratin Kb24</fullName>
    </alternativeName>
</protein>
<feature type="chain" id="PRO_0000063701" description="Keratin, type II cuticular Hb4">
    <location>
        <begin position="1"/>
        <end position="603"/>
    </location>
</feature>
<feature type="domain" description="IF rod" evidence="2">
    <location>
        <begin position="173"/>
        <end position="484"/>
    </location>
</feature>
<feature type="region of interest" description="Head">
    <location>
        <begin position="1"/>
        <end position="173"/>
    </location>
</feature>
<feature type="region of interest" description="Coil 1A">
    <location>
        <begin position="174"/>
        <end position="208"/>
    </location>
</feature>
<feature type="region of interest" description="Linker 1">
    <location>
        <begin position="209"/>
        <end position="218"/>
    </location>
</feature>
<feature type="region of interest" description="Coil 1B">
    <location>
        <begin position="219"/>
        <end position="319"/>
    </location>
</feature>
<feature type="region of interest" description="Linker 12">
    <location>
        <begin position="320"/>
        <end position="336"/>
    </location>
</feature>
<feature type="region of interest" description="Coil 2">
    <location>
        <begin position="337"/>
        <end position="480"/>
    </location>
</feature>
<feature type="region of interest" description="Tail">
    <location>
        <begin position="481"/>
        <end position="603"/>
    </location>
</feature>
<feature type="region of interest" description="Disordered" evidence="3">
    <location>
        <begin position="579"/>
        <end position="603"/>
    </location>
</feature>
<feature type="sequence conflict" description="In Ref. 1; AAK26233 and 3; AAI14972." evidence="5" ref="1 3">
    <original>P</original>
    <variation>T</variation>
    <location>
        <position position="111"/>
    </location>
</feature>
<accession>Q99M73</accession>
<accession>E9QMQ6</accession>
<accession>Q1RME6</accession>
<accession>Q61862</accession>
<keyword id="KW-0175">Coiled coil</keyword>
<keyword id="KW-0403">Intermediate filament</keyword>
<keyword id="KW-0416">Keratin</keyword>
<keyword id="KW-1185">Reference proteome</keyword>
<proteinExistence type="evidence at transcript level"/>
<dbReference type="EMBL" id="AY028607">
    <property type="protein sequence ID" value="AAK26233.1"/>
    <property type="molecule type" value="mRNA"/>
</dbReference>
<dbReference type="EMBL" id="AC103674">
    <property type="status" value="NOT_ANNOTATED_CDS"/>
    <property type="molecule type" value="Genomic_DNA"/>
</dbReference>
<dbReference type="EMBL" id="BC114971">
    <property type="protein sequence ID" value="AAI14972.1"/>
    <property type="molecule type" value="mRNA"/>
</dbReference>
<dbReference type="EMBL" id="X65505">
    <property type="protein sequence ID" value="CAA46479.1"/>
    <property type="molecule type" value="mRNA"/>
</dbReference>
<dbReference type="CCDS" id="CCDS27853.1"/>
<dbReference type="RefSeq" id="NP_032500.2">
    <property type="nucleotide sequence ID" value="NM_008474.2"/>
</dbReference>
<dbReference type="SMR" id="Q99M73"/>
<dbReference type="BioGRID" id="201032">
    <property type="interactions" value="1"/>
</dbReference>
<dbReference type="FunCoup" id="Q99M73">
    <property type="interactions" value="30"/>
</dbReference>
<dbReference type="STRING" id="10090.ENSMUSP00000023720"/>
<dbReference type="iPTMnet" id="Q99M73"/>
<dbReference type="PhosphoSitePlus" id="Q99M73"/>
<dbReference type="SwissPalm" id="Q99M73"/>
<dbReference type="jPOST" id="Q99M73"/>
<dbReference type="PaxDb" id="10090-ENSMUSP00000023720"/>
<dbReference type="PeptideAtlas" id="Q99M73"/>
<dbReference type="ProteomicsDB" id="263465"/>
<dbReference type="Antibodypedia" id="43076">
    <property type="antibodies" value="69 antibodies from 19 providers"/>
</dbReference>
<dbReference type="DNASU" id="16680"/>
<dbReference type="Ensembl" id="ENSMUST00000023720.8">
    <property type="protein sequence ID" value="ENSMUSP00000023720.8"/>
    <property type="gene ID" value="ENSMUSG00000044294.9"/>
</dbReference>
<dbReference type="GeneID" id="16680"/>
<dbReference type="KEGG" id="mmu:16680"/>
<dbReference type="UCSC" id="uc007xtm.2">
    <property type="organism name" value="mouse"/>
</dbReference>
<dbReference type="AGR" id="MGI:96700"/>
<dbReference type="CTD" id="3890"/>
<dbReference type="MGI" id="MGI:96700">
    <property type="gene designation" value="Krt84"/>
</dbReference>
<dbReference type="VEuPathDB" id="HostDB:ENSMUSG00000044294"/>
<dbReference type="eggNOG" id="ENOG502QWIE">
    <property type="taxonomic scope" value="Eukaryota"/>
</dbReference>
<dbReference type="GeneTree" id="ENSGT00940000162040"/>
<dbReference type="HOGENOM" id="CLU_012560_6_1_1"/>
<dbReference type="InParanoid" id="Q99M73"/>
<dbReference type="OMA" id="EQKCARS"/>
<dbReference type="OrthoDB" id="9836621at2759"/>
<dbReference type="PhylomeDB" id="Q99M73"/>
<dbReference type="TreeFam" id="TF317854"/>
<dbReference type="Reactome" id="R-MMU-6805567">
    <property type="pathway name" value="Keratinization"/>
</dbReference>
<dbReference type="Reactome" id="R-MMU-6809371">
    <property type="pathway name" value="Formation of the cornified envelope"/>
</dbReference>
<dbReference type="BioGRID-ORCS" id="16680">
    <property type="hits" value="4 hits in 76 CRISPR screens"/>
</dbReference>
<dbReference type="ChiTaRS" id="Krt84">
    <property type="organism name" value="mouse"/>
</dbReference>
<dbReference type="PRO" id="PR:Q99M73"/>
<dbReference type="Proteomes" id="UP000000589">
    <property type="component" value="Chromosome 15"/>
</dbReference>
<dbReference type="RNAct" id="Q99M73">
    <property type="molecule type" value="protein"/>
</dbReference>
<dbReference type="Bgee" id="ENSMUSG00000044294">
    <property type="expression patterns" value="Expressed in tail skin and 25 other cell types or tissues"/>
</dbReference>
<dbReference type="GO" id="GO:0045111">
    <property type="term" value="C:intermediate filament cytoskeleton"/>
    <property type="evidence" value="ECO:0000314"/>
    <property type="project" value="UniProtKB"/>
</dbReference>
<dbReference type="GO" id="GO:0045095">
    <property type="term" value="C:keratin filament"/>
    <property type="evidence" value="ECO:0007669"/>
    <property type="project" value="Ensembl"/>
</dbReference>
<dbReference type="GO" id="GO:0030280">
    <property type="term" value="F:structural constituent of skin epidermis"/>
    <property type="evidence" value="ECO:0000314"/>
    <property type="project" value="UniProtKB"/>
</dbReference>
<dbReference type="GO" id="GO:0045616">
    <property type="term" value="P:regulation of keratinocyte differentiation"/>
    <property type="evidence" value="ECO:0000314"/>
    <property type="project" value="UniProtKB"/>
</dbReference>
<dbReference type="FunFam" id="1.20.5.1160:FF:000001">
    <property type="entry name" value="Keratin type II"/>
    <property type="match status" value="1"/>
</dbReference>
<dbReference type="FunFam" id="1.20.5.170:FF:000004">
    <property type="entry name" value="Keratin, type II cytoskeletal 5"/>
    <property type="match status" value="1"/>
</dbReference>
<dbReference type="FunFam" id="1.20.5.500:FF:000001">
    <property type="entry name" value="Type II keratin 23"/>
    <property type="match status" value="1"/>
</dbReference>
<dbReference type="Gene3D" id="1.20.5.170">
    <property type="match status" value="1"/>
</dbReference>
<dbReference type="Gene3D" id="1.20.5.500">
    <property type="entry name" value="Single helix bin"/>
    <property type="match status" value="1"/>
</dbReference>
<dbReference type="Gene3D" id="1.20.5.1160">
    <property type="entry name" value="Vasodilator-stimulated phosphoprotein"/>
    <property type="match status" value="1"/>
</dbReference>
<dbReference type="InterPro" id="IPR018039">
    <property type="entry name" value="IF_conserved"/>
</dbReference>
<dbReference type="InterPro" id="IPR039008">
    <property type="entry name" value="IF_rod_dom"/>
</dbReference>
<dbReference type="InterPro" id="IPR032444">
    <property type="entry name" value="Keratin_2_head"/>
</dbReference>
<dbReference type="InterPro" id="IPR003054">
    <property type="entry name" value="Keratin_II"/>
</dbReference>
<dbReference type="PANTHER" id="PTHR45616">
    <property type="entry name" value="GATA-TYPE DOMAIN-CONTAINING PROTEIN"/>
    <property type="match status" value="1"/>
</dbReference>
<dbReference type="PANTHER" id="PTHR45616:SF17">
    <property type="entry name" value="KERATIN, TYPE II CUTICULAR HB4"/>
    <property type="match status" value="1"/>
</dbReference>
<dbReference type="Pfam" id="PF00038">
    <property type="entry name" value="Filament"/>
    <property type="match status" value="1"/>
</dbReference>
<dbReference type="Pfam" id="PF16208">
    <property type="entry name" value="Keratin_2_head"/>
    <property type="match status" value="1"/>
</dbReference>
<dbReference type="PRINTS" id="PR01276">
    <property type="entry name" value="TYPE2KERATIN"/>
</dbReference>
<dbReference type="SMART" id="SM01391">
    <property type="entry name" value="Filament"/>
    <property type="match status" value="1"/>
</dbReference>
<dbReference type="SUPFAM" id="SSF64593">
    <property type="entry name" value="Intermediate filament protein, coiled coil region"/>
    <property type="match status" value="2"/>
</dbReference>
<dbReference type="PROSITE" id="PS00226">
    <property type="entry name" value="IF_ROD_1"/>
    <property type="match status" value="1"/>
</dbReference>
<dbReference type="PROSITE" id="PS51842">
    <property type="entry name" value="IF_ROD_2"/>
    <property type="match status" value="1"/>
</dbReference>
<organism>
    <name type="scientific">Mus musculus</name>
    <name type="common">Mouse</name>
    <dbReference type="NCBI Taxonomy" id="10090"/>
    <lineage>
        <taxon>Eukaryota</taxon>
        <taxon>Metazoa</taxon>
        <taxon>Chordata</taxon>
        <taxon>Craniata</taxon>
        <taxon>Vertebrata</taxon>
        <taxon>Euteleostomi</taxon>
        <taxon>Mammalia</taxon>
        <taxon>Eutheria</taxon>
        <taxon>Euarchontoglires</taxon>
        <taxon>Glires</taxon>
        <taxon>Rodentia</taxon>
        <taxon>Myomorpha</taxon>
        <taxon>Muroidea</taxon>
        <taxon>Muridae</taxon>
        <taxon>Murinae</taxon>
        <taxon>Mus</taxon>
        <taxon>Mus</taxon>
    </lineage>
</organism>
<reference key="1">
    <citation type="journal article" date="2002" name="Genetics">
        <title>Hague (Hag): a new mouse hair mutation with an unstable semidominant allele.</title>
        <authorList>
            <person name="Poirier C."/>
            <person name="Yoshiki A."/>
            <person name="Fujiwara K."/>
            <person name="Guenet J.-L."/>
            <person name="Kusakabe M."/>
        </authorList>
    </citation>
    <scope>NUCLEOTIDE SEQUENCE [MRNA]</scope>
    <source>
        <strain>C3H/HeN</strain>
    </source>
</reference>
<reference key="2">
    <citation type="journal article" date="2009" name="PLoS Biol.">
        <title>Lineage-specific biology revealed by a finished genome assembly of the mouse.</title>
        <authorList>
            <person name="Church D.M."/>
            <person name="Goodstadt L."/>
            <person name="Hillier L.W."/>
            <person name="Zody M.C."/>
            <person name="Goldstein S."/>
            <person name="She X."/>
            <person name="Bult C.J."/>
            <person name="Agarwala R."/>
            <person name="Cherry J.L."/>
            <person name="DiCuccio M."/>
            <person name="Hlavina W."/>
            <person name="Kapustin Y."/>
            <person name="Meric P."/>
            <person name="Maglott D."/>
            <person name="Birtle Z."/>
            <person name="Marques A.C."/>
            <person name="Graves T."/>
            <person name="Zhou S."/>
            <person name="Teague B."/>
            <person name="Potamousis K."/>
            <person name="Churas C."/>
            <person name="Place M."/>
            <person name="Herschleb J."/>
            <person name="Runnheim R."/>
            <person name="Forrest D."/>
            <person name="Amos-Landgraf J."/>
            <person name="Schwartz D.C."/>
            <person name="Cheng Z."/>
            <person name="Lindblad-Toh K."/>
            <person name="Eichler E.E."/>
            <person name="Ponting C.P."/>
        </authorList>
    </citation>
    <scope>NUCLEOTIDE SEQUENCE [LARGE SCALE GENOMIC DNA]</scope>
    <source>
        <strain>C57BL/6J</strain>
    </source>
</reference>
<reference key="3">
    <citation type="journal article" date="2004" name="Genome Res.">
        <title>The status, quality, and expansion of the NIH full-length cDNA project: the Mammalian Gene Collection (MGC).</title>
        <authorList>
            <consortium name="The MGC Project Team"/>
        </authorList>
    </citation>
    <scope>NUCLEOTIDE SEQUENCE [LARGE SCALE MRNA]</scope>
</reference>
<reference key="4">
    <citation type="journal article" date="1992" name="Differentiation">
        <title>Structural features and sites of expression of a new murine 65 kD and 48 kD hair-related keratin pair, associated with a special type of parakeratotic epithelial differentiation.</title>
        <authorList>
            <person name="Tobiasch E."/>
            <person name="Winter H."/>
            <person name="Schweizer J."/>
        </authorList>
    </citation>
    <scope>NUCLEOTIDE SEQUENCE [MRNA] OF 306-603</scope>
    <scope>TISSUE SPECIFICITY</scope>
    <scope>INDUCTION</scope>
    <source>
        <strain>NMRI</strain>
        <tissue>Tail epidermis</tissue>
    </source>
</reference>
<comment type="subunit">
    <text evidence="1">Heterotetramer of two type I and two type II keratins.</text>
</comment>
<comment type="tissue specificity">
    <text evidence="4">In skin, only expressed in the suprabasal cells of tail scale epidermis. Suprabasally expressed in stratified squamous epithelia and also in the posterior unit of the complex filiform papillae of tongue. Expressed in rare anatomical sites in which an orthokeratinized stratum corneum would be too soft and a hard keratinized structure would be too rigid to meet the functional requirement of the respective epithelia.</text>
</comment>
<comment type="induction">
    <text evidence="4">mRNA synthesis is suppressed during retinoic acid-mediated orthokeratotic conversion of tail scale epidermis.</text>
</comment>
<comment type="miscellaneous">
    <text>There are two types of hair/microfibrillar keratin, I (acidic) and II (neutral to basic).</text>
</comment>
<comment type="similarity">
    <text evidence="2">Belongs to the intermediate filament family.</text>
</comment>